<protein>
    <recommendedName>
        <fullName evidence="1">Anthranilate phosphoribosyltransferase</fullName>
        <ecNumber evidence="1">2.4.2.18</ecNumber>
    </recommendedName>
</protein>
<accession>B2HGW0</accession>
<gene>
    <name evidence="1" type="primary">trpD</name>
    <name type="ordered locus">MMAR_3236</name>
</gene>
<reference key="1">
    <citation type="journal article" date="2008" name="Genome Res.">
        <title>Insights from the complete genome sequence of Mycobacterium marinum on the evolution of Mycobacterium tuberculosis.</title>
        <authorList>
            <person name="Stinear T.P."/>
            <person name="Seemann T."/>
            <person name="Harrison P.F."/>
            <person name="Jenkin G.A."/>
            <person name="Davies J.K."/>
            <person name="Johnson P.D."/>
            <person name="Abdellah Z."/>
            <person name="Arrowsmith C."/>
            <person name="Chillingworth T."/>
            <person name="Churcher C."/>
            <person name="Clarke K."/>
            <person name="Cronin A."/>
            <person name="Davis P."/>
            <person name="Goodhead I."/>
            <person name="Holroyd N."/>
            <person name="Jagels K."/>
            <person name="Lord A."/>
            <person name="Moule S."/>
            <person name="Mungall K."/>
            <person name="Norbertczak H."/>
            <person name="Quail M.A."/>
            <person name="Rabbinowitsch E."/>
            <person name="Walker D."/>
            <person name="White B."/>
            <person name="Whitehead S."/>
            <person name="Small P.L."/>
            <person name="Brosch R."/>
            <person name="Ramakrishnan L."/>
            <person name="Fischbach M.A."/>
            <person name="Parkhill J."/>
            <person name="Cole S.T."/>
        </authorList>
    </citation>
    <scope>NUCLEOTIDE SEQUENCE [LARGE SCALE GENOMIC DNA]</scope>
    <source>
        <strain>ATCC BAA-535 / M</strain>
    </source>
</reference>
<proteinExistence type="inferred from homology"/>
<name>TRPD_MYCMM</name>
<sequence>MVLSSEASSAADHSAAAPIPTSSWPQLLGRLTEGKHLEPGQAGWAMEQIMSGNARPAQVAAFAVAMKMKVPTAGEVGELADVMLAYARPMPADLIRDDTVDIVGTGGDGVNTVNLSTMASIVVAAAGVPVVKHGNRAASSLAGGADTLEALGVRIDLGPDQVARSLNEIGIGFCFAPQFHPSYRQASVVRREIGVPTVFNLLGPLTNPARPRAGLIGCAFADLAEIMAGVFATRGSSVLVVHGDDGLDELTTTTTSTIWRVQAGTVDKLTFDPGDFGFARAELSQLLGGDPQANAAEARAVLGGAAGPVRDAVVLNAAGAIVAHAGLSSRAEWLPAWQDGLQRAAVAIDSGAAEQLLARWVRFSQHV</sequence>
<comment type="function">
    <text evidence="1">Catalyzes the transfer of the phosphoribosyl group of 5-phosphorylribose-1-pyrophosphate (PRPP) to anthranilate to yield N-(5'-phosphoribosyl)-anthranilate (PRA).</text>
</comment>
<comment type="catalytic activity">
    <reaction evidence="1">
        <text>N-(5-phospho-beta-D-ribosyl)anthranilate + diphosphate = 5-phospho-alpha-D-ribose 1-diphosphate + anthranilate</text>
        <dbReference type="Rhea" id="RHEA:11768"/>
        <dbReference type="ChEBI" id="CHEBI:16567"/>
        <dbReference type="ChEBI" id="CHEBI:18277"/>
        <dbReference type="ChEBI" id="CHEBI:33019"/>
        <dbReference type="ChEBI" id="CHEBI:58017"/>
        <dbReference type="EC" id="2.4.2.18"/>
    </reaction>
</comment>
<comment type="cofactor">
    <cofactor evidence="1">
        <name>Mg(2+)</name>
        <dbReference type="ChEBI" id="CHEBI:18420"/>
    </cofactor>
    <text evidence="1">Binds 2 magnesium ions per monomer.</text>
</comment>
<comment type="pathway">
    <text evidence="1">Amino-acid biosynthesis; L-tryptophan biosynthesis; L-tryptophan from chorismate: step 2/5.</text>
</comment>
<comment type="subunit">
    <text evidence="1">Homodimer.</text>
</comment>
<comment type="similarity">
    <text evidence="1">Belongs to the anthranilate phosphoribosyltransferase family.</text>
</comment>
<dbReference type="EC" id="2.4.2.18" evidence="1"/>
<dbReference type="EMBL" id="CP000854">
    <property type="protein sequence ID" value="ACC41663.1"/>
    <property type="molecule type" value="Genomic_DNA"/>
</dbReference>
<dbReference type="RefSeq" id="WP_012394897.1">
    <property type="nucleotide sequence ID" value="NC_010612.1"/>
</dbReference>
<dbReference type="SMR" id="B2HGW0"/>
<dbReference type="STRING" id="216594.MMAR_3236"/>
<dbReference type="KEGG" id="mmi:MMAR_3236"/>
<dbReference type="eggNOG" id="COG0547">
    <property type="taxonomic scope" value="Bacteria"/>
</dbReference>
<dbReference type="HOGENOM" id="CLU_034315_4_1_11"/>
<dbReference type="OrthoDB" id="9806430at2"/>
<dbReference type="UniPathway" id="UPA00035">
    <property type="reaction ID" value="UER00041"/>
</dbReference>
<dbReference type="Proteomes" id="UP000001190">
    <property type="component" value="Chromosome"/>
</dbReference>
<dbReference type="GO" id="GO:0005829">
    <property type="term" value="C:cytosol"/>
    <property type="evidence" value="ECO:0007669"/>
    <property type="project" value="TreeGrafter"/>
</dbReference>
<dbReference type="GO" id="GO:0004048">
    <property type="term" value="F:anthranilate phosphoribosyltransferase activity"/>
    <property type="evidence" value="ECO:0007669"/>
    <property type="project" value="UniProtKB-UniRule"/>
</dbReference>
<dbReference type="GO" id="GO:0000287">
    <property type="term" value="F:magnesium ion binding"/>
    <property type="evidence" value="ECO:0007669"/>
    <property type="project" value="UniProtKB-UniRule"/>
</dbReference>
<dbReference type="GO" id="GO:0000162">
    <property type="term" value="P:L-tryptophan biosynthetic process"/>
    <property type="evidence" value="ECO:0007669"/>
    <property type="project" value="UniProtKB-UniRule"/>
</dbReference>
<dbReference type="FunFam" id="3.40.1030.10:FF:000002">
    <property type="entry name" value="Anthranilate phosphoribosyltransferase"/>
    <property type="match status" value="1"/>
</dbReference>
<dbReference type="Gene3D" id="3.40.1030.10">
    <property type="entry name" value="Nucleoside phosphorylase/phosphoribosyltransferase catalytic domain"/>
    <property type="match status" value="1"/>
</dbReference>
<dbReference type="Gene3D" id="1.20.970.10">
    <property type="entry name" value="Transferase, Pyrimidine Nucleoside Phosphorylase, Chain C"/>
    <property type="match status" value="1"/>
</dbReference>
<dbReference type="HAMAP" id="MF_00211">
    <property type="entry name" value="TrpD"/>
    <property type="match status" value="1"/>
</dbReference>
<dbReference type="InterPro" id="IPR005940">
    <property type="entry name" value="Anthranilate_Pribosyl_Tfrase"/>
</dbReference>
<dbReference type="InterPro" id="IPR000312">
    <property type="entry name" value="Glycosyl_Trfase_fam3"/>
</dbReference>
<dbReference type="InterPro" id="IPR017459">
    <property type="entry name" value="Glycosyl_Trfase_fam3_N_dom"/>
</dbReference>
<dbReference type="InterPro" id="IPR036320">
    <property type="entry name" value="Glycosyl_Trfase_fam3_N_dom_sf"/>
</dbReference>
<dbReference type="InterPro" id="IPR035902">
    <property type="entry name" value="Nuc_phospho_transferase"/>
</dbReference>
<dbReference type="NCBIfam" id="TIGR01245">
    <property type="entry name" value="trpD"/>
    <property type="match status" value="1"/>
</dbReference>
<dbReference type="PANTHER" id="PTHR43285">
    <property type="entry name" value="ANTHRANILATE PHOSPHORIBOSYLTRANSFERASE"/>
    <property type="match status" value="1"/>
</dbReference>
<dbReference type="PANTHER" id="PTHR43285:SF2">
    <property type="entry name" value="ANTHRANILATE PHOSPHORIBOSYLTRANSFERASE"/>
    <property type="match status" value="1"/>
</dbReference>
<dbReference type="Pfam" id="PF02885">
    <property type="entry name" value="Glycos_trans_3N"/>
    <property type="match status" value="1"/>
</dbReference>
<dbReference type="Pfam" id="PF00591">
    <property type="entry name" value="Glycos_transf_3"/>
    <property type="match status" value="1"/>
</dbReference>
<dbReference type="SUPFAM" id="SSF52418">
    <property type="entry name" value="Nucleoside phosphorylase/phosphoribosyltransferase catalytic domain"/>
    <property type="match status" value="1"/>
</dbReference>
<dbReference type="SUPFAM" id="SSF47648">
    <property type="entry name" value="Nucleoside phosphorylase/phosphoribosyltransferase N-terminal domain"/>
    <property type="match status" value="1"/>
</dbReference>
<organism>
    <name type="scientific">Mycobacterium marinum (strain ATCC BAA-535 / M)</name>
    <dbReference type="NCBI Taxonomy" id="216594"/>
    <lineage>
        <taxon>Bacteria</taxon>
        <taxon>Bacillati</taxon>
        <taxon>Actinomycetota</taxon>
        <taxon>Actinomycetes</taxon>
        <taxon>Mycobacteriales</taxon>
        <taxon>Mycobacteriaceae</taxon>
        <taxon>Mycobacterium</taxon>
        <taxon>Mycobacterium ulcerans group</taxon>
    </lineage>
</organism>
<evidence type="ECO:0000255" key="1">
    <source>
        <dbReference type="HAMAP-Rule" id="MF_00211"/>
    </source>
</evidence>
<evidence type="ECO:0000256" key="2">
    <source>
        <dbReference type="SAM" id="MobiDB-lite"/>
    </source>
</evidence>
<feature type="chain" id="PRO_1000099824" description="Anthranilate phosphoribosyltransferase">
    <location>
        <begin position="1"/>
        <end position="367"/>
    </location>
</feature>
<feature type="region of interest" description="Disordered" evidence="2">
    <location>
        <begin position="1"/>
        <end position="22"/>
    </location>
</feature>
<feature type="compositionally biased region" description="Low complexity" evidence="2">
    <location>
        <begin position="1"/>
        <end position="17"/>
    </location>
</feature>
<feature type="binding site" evidence="1">
    <location>
        <position position="104"/>
    </location>
    <ligand>
        <name>5-phospho-alpha-D-ribose 1-diphosphate</name>
        <dbReference type="ChEBI" id="CHEBI:58017"/>
    </ligand>
</feature>
<feature type="binding site" evidence="1">
    <location>
        <position position="104"/>
    </location>
    <ligand>
        <name>anthranilate</name>
        <dbReference type="ChEBI" id="CHEBI:16567"/>
        <label>1</label>
    </ligand>
</feature>
<feature type="binding site" evidence="1">
    <location>
        <begin position="107"/>
        <end position="108"/>
    </location>
    <ligand>
        <name>5-phospho-alpha-D-ribose 1-diphosphate</name>
        <dbReference type="ChEBI" id="CHEBI:58017"/>
    </ligand>
</feature>
<feature type="binding site" evidence="1">
    <location>
        <position position="112"/>
    </location>
    <ligand>
        <name>5-phospho-alpha-D-ribose 1-diphosphate</name>
        <dbReference type="ChEBI" id="CHEBI:58017"/>
    </ligand>
</feature>
<feature type="binding site" evidence="1">
    <location>
        <begin position="114"/>
        <end position="117"/>
    </location>
    <ligand>
        <name>5-phospho-alpha-D-ribose 1-diphosphate</name>
        <dbReference type="ChEBI" id="CHEBI:58017"/>
    </ligand>
</feature>
<feature type="binding site" evidence="1">
    <location>
        <position position="116"/>
    </location>
    <ligand>
        <name>Mg(2+)</name>
        <dbReference type="ChEBI" id="CHEBI:18420"/>
        <label>1</label>
    </ligand>
</feature>
<feature type="binding site" evidence="1">
    <location>
        <begin position="132"/>
        <end position="140"/>
    </location>
    <ligand>
        <name>5-phospho-alpha-D-ribose 1-diphosphate</name>
        <dbReference type="ChEBI" id="CHEBI:58017"/>
    </ligand>
</feature>
<feature type="binding site" evidence="1">
    <location>
        <position position="135"/>
    </location>
    <ligand>
        <name>anthranilate</name>
        <dbReference type="ChEBI" id="CHEBI:16567"/>
        <label>1</label>
    </ligand>
</feature>
<feature type="binding site" evidence="1">
    <location>
        <position position="144"/>
    </location>
    <ligand>
        <name>5-phospho-alpha-D-ribose 1-diphosphate</name>
        <dbReference type="ChEBI" id="CHEBI:58017"/>
    </ligand>
</feature>
<feature type="binding site" evidence="1">
    <location>
        <position position="190"/>
    </location>
    <ligand>
        <name>anthranilate</name>
        <dbReference type="ChEBI" id="CHEBI:16567"/>
        <label>2</label>
    </ligand>
</feature>
<feature type="binding site" evidence="1">
    <location>
        <position position="248"/>
    </location>
    <ligand>
        <name>Mg(2+)</name>
        <dbReference type="ChEBI" id="CHEBI:18420"/>
        <label>2</label>
    </ligand>
</feature>
<feature type="binding site" evidence="1">
    <location>
        <position position="249"/>
    </location>
    <ligand>
        <name>Mg(2+)</name>
        <dbReference type="ChEBI" id="CHEBI:18420"/>
        <label>1</label>
    </ligand>
</feature>
<feature type="binding site" evidence="1">
    <location>
        <position position="249"/>
    </location>
    <ligand>
        <name>Mg(2+)</name>
        <dbReference type="ChEBI" id="CHEBI:18420"/>
        <label>2</label>
    </ligand>
</feature>
<keyword id="KW-0028">Amino-acid biosynthesis</keyword>
<keyword id="KW-0057">Aromatic amino acid biosynthesis</keyword>
<keyword id="KW-0328">Glycosyltransferase</keyword>
<keyword id="KW-0460">Magnesium</keyword>
<keyword id="KW-0479">Metal-binding</keyword>
<keyword id="KW-1185">Reference proteome</keyword>
<keyword id="KW-0808">Transferase</keyword>
<keyword id="KW-0822">Tryptophan biosynthesis</keyword>